<feature type="chain" id="PRO_1000116026" description="Ferrochelatase">
    <location>
        <begin position="1"/>
        <end position="319"/>
    </location>
</feature>
<feature type="binding site" evidence="1">
    <location>
        <position position="193"/>
    </location>
    <ligand>
        <name>Fe cation</name>
        <dbReference type="ChEBI" id="CHEBI:24875"/>
    </ligand>
</feature>
<feature type="binding site" evidence="1">
    <location>
        <position position="274"/>
    </location>
    <ligand>
        <name>Fe cation</name>
        <dbReference type="ChEBI" id="CHEBI:24875"/>
    </ligand>
</feature>
<accession>B3H307</accession>
<keyword id="KW-0963">Cytoplasm</keyword>
<keyword id="KW-0350">Heme biosynthesis</keyword>
<keyword id="KW-0408">Iron</keyword>
<keyword id="KW-0456">Lyase</keyword>
<keyword id="KW-0479">Metal-binding</keyword>
<keyword id="KW-0627">Porphyrin biosynthesis</keyword>
<gene>
    <name evidence="1" type="primary">hemH</name>
    <name type="ordered locus">APP7_2025</name>
</gene>
<name>HEMH_ACTP7</name>
<sequence length="319" mass="36253">MNTNKIGVLLANLGTPDEPTTPAVKRYLKQFLSDPRVIDLPKFKWQFILNYMILPKRSPKVAKLYREIWTEQGSPLLAISRQQQQALQDYFNRQNQNVLVELGMSYGNPSIESATDRLIKAGVSKIIVLPLYPQYSSTTTASVLDAFARGLTQQRNIVPFEFIHSYHNDPLYIQALANTIQLAEDEKLLFSFHGIPKRYQTEGDFYPEHCQQTAQLVADKLSLTDEQWLVTYQSRFGDEEWLQPYTDETLETLPSQGVKKIAVICAGFSADCLETLEEIAEENKENFLNAGGQSYRYIPALNANTDHINALAKLIEAKI</sequence>
<evidence type="ECO:0000255" key="1">
    <source>
        <dbReference type="HAMAP-Rule" id="MF_00323"/>
    </source>
</evidence>
<protein>
    <recommendedName>
        <fullName evidence="1">Ferrochelatase</fullName>
        <ecNumber evidence="1">4.98.1.1</ecNumber>
    </recommendedName>
    <alternativeName>
        <fullName evidence="1">Heme synthase</fullName>
    </alternativeName>
    <alternativeName>
        <fullName evidence="1">Protoheme ferro-lyase</fullName>
    </alternativeName>
</protein>
<proteinExistence type="inferred from homology"/>
<comment type="function">
    <text evidence="1">Catalyzes the ferrous insertion into protoporphyrin IX.</text>
</comment>
<comment type="catalytic activity">
    <reaction evidence="1">
        <text>heme b + 2 H(+) = protoporphyrin IX + Fe(2+)</text>
        <dbReference type="Rhea" id="RHEA:22584"/>
        <dbReference type="ChEBI" id="CHEBI:15378"/>
        <dbReference type="ChEBI" id="CHEBI:29033"/>
        <dbReference type="ChEBI" id="CHEBI:57306"/>
        <dbReference type="ChEBI" id="CHEBI:60344"/>
        <dbReference type="EC" id="4.98.1.1"/>
    </reaction>
</comment>
<comment type="pathway">
    <text evidence="1">Porphyrin-containing compound metabolism; protoheme biosynthesis; protoheme from protoporphyrin-IX: step 1/1.</text>
</comment>
<comment type="subcellular location">
    <subcellularLocation>
        <location evidence="1">Cytoplasm</location>
    </subcellularLocation>
</comment>
<comment type="similarity">
    <text evidence="1">Belongs to the ferrochelatase family.</text>
</comment>
<reference key="1">
    <citation type="submission" date="2008-06" db="EMBL/GenBank/DDBJ databases">
        <title>Genome and proteome analysis of A. pleuropneumoniae serotype 7.</title>
        <authorList>
            <person name="Linke B."/>
            <person name="Buettner F."/>
            <person name="Martinez-Arias R."/>
            <person name="Goesmann A."/>
            <person name="Baltes N."/>
            <person name="Tegetmeyer H."/>
            <person name="Singh M."/>
            <person name="Gerlach G.F."/>
        </authorList>
    </citation>
    <scope>NUCLEOTIDE SEQUENCE [LARGE SCALE GENOMIC DNA]</scope>
    <source>
        <strain>AP76</strain>
    </source>
</reference>
<organism>
    <name type="scientific">Actinobacillus pleuropneumoniae serotype 7 (strain AP76)</name>
    <dbReference type="NCBI Taxonomy" id="537457"/>
    <lineage>
        <taxon>Bacteria</taxon>
        <taxon>Pseudomonadati</taxon>
        <taxon>Pseudomonadota</taxon>
        <taxon>Gammaproteobacteria</taxon>
        <taxon>Pasteurellales</taxon>
        <taxon>Pasteurellaceae</taxon>
        <taxon>Actinobacillus</taxon>
    </lineage>
</organism>
<dbReference type="EC" id="4.98.1.1" evidence="1"/>
<dbReference type="EMBL" id="CP001091">
    <property type="protein sequence ID" value="ACE62677.1"/>
    <property type="molecule type" value="Genomic_DNA"/>
</dbReference>
<dbReference type="RefSeq" id="WP_005618383.1">
    <property type="nucleotide sequence ID" value="NC_010939.1"/>
</dbReference>
<dbReference type="SMR" id="B3H307"/>
<dbReference type="KEGG" id="apa:APP7_2025"/>
<dbReference type="HOGENOM" id="CLU_018884_0_0_6"/>
<dbReference type="UniPathway" id="UPA00252">
    <property type="reaction ID" value="UER00325"/>
</dbReference>
<dbReference type="Proteomes" id="UP000001226">
    <property type="component" value="Chromosome"/>
</dbReference>
<dbReference type="GO" id="GO:0005737">
    <property type="term" value="C:cytoplasm"/>
    <property type="evidence" value="ECO:0007669"/>
    <property type="project" value="UniProtKB-SubCell"/>
</dbReference>
<dbReference type="GO" id="GO:0004325">
    <property type="term" value="F:ferrochelatase activity"/>
    <property type="evidence" value="ECO:0007669"/>
    <property type="project" value="UniProtKB-UniRule"/>
</dbReference>
<dbReference type="GO" id="GO:0046872">
    <property type="term" value="F:metal ion binding"/>
    <property type="evidence" value="ECO:0007669"/>
    <property type="project" value="UniProtKB-KW"/>
</dbReference>
<dbReference type="GO" id="GO:0006783">
    <property type="term" value="P:heme biosynthetic process"/>
    <property type="evidence" value="ECO:0007669"/>
    <property type="project" value="UniProtKB-UniRule"/>
</dbReference>
<dbReference type="CDD" id="cd00419">
    <property type="entry name" value="Ferrochelatase_C"/>
    <property type="match status" value="1"/>
</dbReference>
<dbReference type="CDD" id="cd03411">
    <property type="entry name" value="Ferrochelatase_N"/>
    <property type="match status" value="1"/>
</dbReference>
<dbReference type="FunFam" id="3.40.50.1400:FF:000002">
    <property type="entry name" value="Ferrochelatase"/>
    <property type="match status" value="1"/>
</dbReference>
<dbReference type="Gene3D" id="3.40.50.1400">
    <property type="match status" value="2"/>
</dbReference>
<dbReference type="HAMAP" id="MF_00323">
    <property type="entry name" value="Ferrochelatase"/>
    <property type="match status" value="1"/>
</dbReference>
<dbReference type="InterPro" id="IPR001015">
    <property type="entry name" value="Ferrochelatase"/>
</dbReference>
<dbReference type="InterPro" id="IPR019772">
    <property type="entry name" value="Ferrochelatase_AS"/>
</dbReference>
<dbReference type="InterPro" id="IPR033644">
    <property type="entry name" value="Ferrochelatase_C"/>
</dbReference>
<dbReference type="InterPro" id="IPR033659">
    <property type="entry name" value="Ferrochelatase_N"/>
</dbReference>
<dbReference type="NCBIfam" id="TIGR00109">
    <property type="entry name" value="hemH"/>
    <property type="match status" value="1"/>
</dbReference>
<dbReference type="PANTHER" id="PTHR11108">
    <property type="entry name" value="FERROCHELATASE"/>
    <property type="match status" value="1"/>
</dbReference>
<dbReference type="PANTHER" id="PTHR11108:SF1">
    <property type="entry name" value="FERROCHELATASE, MITOCHONDRIAL"/>
    <property type="match status" value="1"/>
</dbReference>
<dbReference type="Pfam" id="PF00762">
    <property type="entry name" value="Ferrochelatase"/>
    <property type="match status" value="1"/>
</dbReference>
<dbReference type="SUPFAM" id="SSF53800">
    <property type="entry name" value="Chelatase"/>
    <property type="match status" value="1"/>
</dbReference>
<dbReference type="PROSITE" id="PS00534">
    <property type="entry name" value="FERROCHELATASE"/>
    <property type="match status" value="1"/>
</dbReference>